<proteinExistence type="inferred from homology"/>
<feature type="chain" id="PRO_0000219541" description="Nitrogenase-stabilizing/protective protein NifW">
    <location>
        <begin position="1"/>
        <end position="108"/>
    </location>
</feature>
<keyword id="KW-0535">Nitrogen fixation</keyword>
<evidence type="ECO:0000250" key="1"/>
<evidence type="ECO:0000305" key="2"/>
<reference key="1">
    <citation type="journal article" date="1992" name="J. Bacteriol.">
        <title>Isolation and characterization of the nifUSVW-rpoN gene cluster from Rhodobacter sphaeroides.</title>
        <authorList>
            <person name="Meijer W.G."/>
            <person name="Tabita F.R."/>
        </authorList>
    </citation>
    <scope>NUCLEOTIDE SEQUENCE [GENOMIC DNA]</scope>
</reference>
<accession>Q01182</accession>
<comment type="function">
    <text evidence="1">May protect the nitrogenase Fe-Mo protein from oxidative damage.</text>
</comment>
<comment type="subunit">
    <text evidence="1">Homotrimer; associates with NifD.</text>
</comment>
<comment type="similarity">
    <text evidence="2">Belongs to the NifW family.</text>
</comment>
<gene>
    <name type="primary">nifW</name>
</gene>
<sequence>MTPGTAVLEELKRLSSAEEIFDALDHPYRPEVVQVARLHIMKRLGQYLAAVDFATLDPADARAAARDALSRAYTDFVDSSPLEQKVFKVFAKPSRAFVPLSGLSVVED</sequence>
<name>NIFW_CERSP</name>
<organism>
    <name type="scientific">Cereibacter sphaeroides</name>
    <name type="common">Rhodobacter sphaeroides</name>
    <dbReference type="NCBI Taxonomy" id="1063"/>
    <lineage>
        <taxon>Bacteria</taxon>
        <taxon>Pseudomonadati</taxon>
        <taxon>Pseudomonadota</taxon>
        <taxon>Alphaproteobacteria</taxon>
        <taxon>Rhodobacterales</taxon>
        <taxon>Paracoccaceae</taxon>
        <taxon>Cereibacter</taxon>
    </lineage>
</organism>
<dbReference type="EMBL" id="M86823">
    <property type="protein sequence ID" value="AAA26139.1"/>
    <property type="molecule type" value="Genomic_DNA"/>
</dbReference>
<dbReference type="PIR" id="E41880">
    <property type="entry name" value="E41880"/>
</dbReference>
<dbReference type="RefSeq" id="WP_011338296.1">
    <property type="nucleotide sequence ID" value="NZ_WSNV01000246.1"/>
</dbReference>
<dbReference type="GeneID" id="3718441"/>
<dbReference type="GO" id="GO:0009399">
    <property type="term" value="P:nitrogen fixation"/>
    <property type="evidence" value="ECO:0007669"/>
    <property type="project" value="UniProtKB-UniRule"/>
</dbReference>
<dbReference type="HAMAP" id="MF_00529">
    <property type="entry name" value="NifW"/>
    <property type="match status" value="1"/>
</dbReference>
<dbReference type="InterPro" id="IPR004893">
    <property type="entry name" value="NifW"/>
</dbReference>
<dbReference type="NCBIfam" id="NF002009">
    <property type="entry name" value="PRK00810.1"/>
    <property type="match status" value="1"/>
</dbReference>
<dbReference type="Pfam" id="PF03206">
    <property type="entry name" value="NifW"/>
    <property type="match status" value="1"/>
</dbReference>
<dbReference type="PIRSF" id="PIRSF005790">
    <property type="entry name" value="NifW"/>
    <property type="match status" value="1"/>
</dbReference>
<protein>
    <recommendedName>
        <fullName>Nitrogenase-stabilizing/protective protein NifW</fullName>
    </recommendedName>
</protein>